<dbReference type="EC" id="3.6.1.17" evidence="1"/>
<dbReference type="EMBL" id="CP000557">
    <property type="protein sequence ID" value="ABO66092.1"/>
    <property type="molecule type" value="Genomic_DNA"/>
</dbReference>
<dbReference type="RefSeq" id="WP_011886949.1">
    <property type="nucleotide sequence ID" value="NC_009328.1"/>
</dbReference>
<dbReference type="SMR" id="A4IL88"/>
<dbReference type="KEGG" id="gtn:GTNG_0712"/>
<dbReference type="eggNOG" id="COG0639">
    <property type="taxonomic scope" value="Bacteria"/>
</dbReference>
<dbReference type="HOGENOM" id="CLU_023125_3_0_9"/>
<dbReference type="Proteomes" id="UP000001578">
    <property type="component" value="Chromosome"/>
</dbReference>
<dbReference type="GO" id="GO:0005737">
    <property type="term" value="C:cytoplasm"/>
    <property type="evidence" value="ECO:0007669"/>
    <property type="project" value="TreeGrafter"/>
</dbReference>
<dbReference type="GO" id="GO:0004081">
    <property type="term" value="F:bis(5'-nucleosyl)-tetraphosphatase (asymmetrical) activity"/>
    <property type="evidence" value="ECO:0007669"/>
    <property type="project" value="UniProtKB-UniRule"/>
</dbReference>
<dbReference type="GO" id="GO:0005525">
    <property type="term" value="F:GTP binding"/>
    <property type="evidence" value="ECO:0007669"/>
    <property type="project" value="UniProtKB-KW"/>
</dbReference>
<dbReference type="GO" id="GO:0016151">
    <property type="term" value="F:nickel cation binding"/>
    <property type="evidence" value="ECO:0007669"/>
    <property type="project" value="UniProtKB-UniRule"/>
</dbReference>
<dbReference type="GO" id="GO:0016791">
    <property type="term" value="F:phosphatase activity"/>
    <property type="evidence" value="ECO:0007669"/>
    <property type="project" value="TreeGrafter"/>
</dbReference>
<dbReference type="CDD" id="cd07423">
    <property type="entry name" value="MPP_Prp_like"/>
    <property type="match status" value="1"/>
</dbReference>
<dbReference type="Gene3D" id="3.60.21.10">
    <property type="match status" value="1"/>
</dbReference>
<dbReference type="HAMAP" id="MF_01443">
    <property type="entry name" value="PrpE"/>
    <property type="match status" value="1"/>
</dbReference>
<dbReference type="InterPro" id="IPR050126">
    <property type="entry name" value="Ap4A_hydrolase"/>
</dbReference>
<dbReference type="InterPro" id="IPR023937">
    <property type="entry name" value="Bis(5'-nucleosyl)-tetraP_PrpE"/>
</dbReference>
<dbReference type="InterPro" id="IPR004843">
    <property type="entry name" value="Calcineurin-like_PHP_ApaH"/>
</dbReference>
<dbReference type="InterPro" id="IPR029052">
    <property type="entry name" value="Metallo-depent_PP-like"/>
</dbReference>
<dbReference type="InterPro" id="IPR041780">
    <property type="entry name" value="MPP_PrpE-like"/>
</dbReference>
<dbReference type="NCBIfam" id="NF010148">
    <property type="entry name" value="PRK13625.1"/>
    <property type="match status" value="1"/>
</dbReference>
<dbReference type="PANTHER" id="PTHR42850:SF7">
    <property type="entry name" value="BIS(5'-NUCLEOSYL)-TETRAPHOSPHATASE PRPE [ASYMMETRICAL]"/>
    <property type="match status" value="1"/>
</dbReference>
<dbReference type="PANTHER" id="PTHR42850">
    <property type="entry name" value="METALLOPHOSPHOESTERASE"/>
    <property type="match status" value="1"/>
</dbReference>
<dbReference type="Pfam" id="PF00149">
    <property type="entry name" value="Metallophos"/>
    <property type="match status" value="1"/>
</dbReference>
<dbReference type="SUPFAM" id="SSF56300">
    <property type="entry name" value="Metallo-dependent phosphatases"/>
    <property type="match status" value="1"/>
</dbReference>
<reference key="1">
    <citation type="journal article" date="2007" name="Proc. Natl. Acad. Sci. U.S.A.">
        <title>Genome and proteome of long-chain alkane degrading Geobacillus thermodenitrificans NG80-2 isolated from a deep-subsurface oil reservoir.</title>
        <authorList>
            <person name="Feng L."/>
            <person name="Wang W."/>
            <person name="Cheng J."/>
            <person name="Ren Y."/>
            <person name="Zhao G."/>
            <person name="Gao C."/>
            <person name="Tang Y."/>
            <person name="Liu X."/>
            <person name="Han W."/>
            <person name="Peng X."/>
            <person name="Liu R."/>
            <person name="Wang L."/>
        </authorList>
    </citation>
    <scope>NUCLEOTIDE SEQUENCE [LARGE SCALE GENOMIC DNA]</scope>
    <source>
        <strain>NG80-2</strain>
    </source>
</reference>
<accession>A4IL88</accession>
<evidence type="ECO:0000255" key="1">
    <source>
        <dbReference type="HAMAP-Rule" id="MF_01443"/>
    </source>
</evidence>
<gene>
    <name evidence="1" type="primary">prpE</name>
    <name type="ordered locus">GTNG_0712</name>
</gene>
<protein>
    <recommendedName>
        <fullName evidence="1">Bis(5'-nucleosyl)-tetraphosphatase PrpE [asymmetrical]</fullName>
        <ecNumber evidence="1">3.6.1.17</ecNumber>
    </recommendedName>
    <alternativeName>
        <fullName evidence="1">Ap4A hydrolase</fullName>
    </alternativeName>
    <alternativeName>
        <fullName evidence="1">Diadenosine 5',5'''-P1,P4-tetraphosphate asymmetrical hydrolase</fullName>
        <shortName evidence="1">Diadenosine tetraphosphatase</shortName>
    </alternativeName>
</protein>
<feature type="chain" id="PRO_0000297704" description="Bis(5'-nucleosyl)-tetraphosphatase PrpE [asymmetrical]">
    <location>
        <begin position="1"/>
        <end position="245"/>
    </location>
</feature>
<comment type="function">
    <text evidence="1">Asymmetrically hydrolyzes Ap4p to yield AMP and ATP.</text>
</comment>
<comment type="catalytic activity">
    <reaction evidence="1">
        <text>P(1),P(4)-bis(5'-guanosyl) tetraphosphate + H2O = GMP + GTP + 2 H(+)</text>
        <dbReference type="Rhea" id="RHEA:22484"/>
        <dbReference type="ChEBI" id="CHEBI:15377"/>
        <dbReference type="ChEBI" id="CHEBI:15378"/>
        <dbReference type="ChEBI" id="CHEBI:37565"/>
        <dbReference type="ChEBI" id="CHEBI:57553"/>
        <dbReference type="ChEBI" id="CHEBI:58115"/>
        <dbReference type="EC" id="3.6.1.17"/>
    </reaction>
</comment>
<comment type="cofactor">
    <cofactor evidence="1">
        <name>Ni(2+)</name>
        <dbReference type="ChEBI" id="CHEBI:49786"/>
    </cofactor>
</comment>
<comment type="similarity">
    <text evidence="1">Belongs to the PrpE family.</text>
</comment>
<sequence>MHIDIIGDIHGCYREFTALTEKLGYVWDKGIPIHPDGRKLGFVGDLTDRGPESLKMIDIVCALVDRKLAHYVPGNHCNKLYRFFLGRNVQVTHGLETTVAEYRALPPSEQEMIRRKFIRLYEGAPLYAVLDEGRLVIAHAGIRHDYIGRMDKKVKTFVLYGDITGETNPDGTPVRRDWAKRYRGDAWIVYGHTPVEKPRFVGRTVNIDTGCVFGGALTALRYPEMTTVSVPSSMPHVPEKFRTFS</sequence>
<organism>
    <name type="scientific">Geobacillus thermodenitrificans (strain NG80-2)</name>
    <dbReference type="NCBI Taxonomy" id="420246"/>
    <lineage>
        <taxon>Bacteria</taxon>
        <taxon>Bacillati</taxon>
        <taxon>Bacillota</taxon>
        <taxon>Bacilli</taxon>
        <taxon>Bacillales</taxon>
        <taxon>Anoxybacillaceae</taxon>
        <taxon>Geobacillus</taxon>
    </lineage>
</organism>
<proteinExistence type="inferred from homology"/>
<keyword id="KW-0342">GTP-binding</keyword>
<keyword id="KW-0378">Hydrolase</keyword>
<keyword id="KW-0533">Nickel</keyword>
<keyword id="KW-0547">Nucleotide-binding</keyword>
<name>PRPE_GEOTN</name>